<feature type="chain" id="PRO_0000335318" description="Ribosomal RNA small subunit methyltransferase G">
    <location>
        <begin position="1"/>
        <end position="232"/>
    </location>
</feature>
<feature type="binding site" evidence="1">
    <location>
        <position position="93"/>
    </location>
    <ligand>
        <name>S-adenosyl-L-methionine</name>
        <dbReference type="ChEBI" id="CHEBI:59789"/>
    </ligand>
</feature>
<feature type="binding site" evidence="1">
    <location>
        <position position="98"/>
    </location>
    <ligand>
        <name>S-adenosyl-L-methionine</name>
        <dbReference type="ChEBI" id="CHEBI:59789"/>
    </ligand>
</feature>
<feature type="binding site" evidence="1">
    <location>
        <begin position="144"/>
        <end position="145"/>
    </location>
    <ligand>
        <name>S-adenosyl-L-methionine</name>
        <dbReference type="ChEBI" id="CHEBI:59789"/>
    </ligand>
</feature>
<feature type="binding site" evidence="1">
    <location>
        <position position="163"/>
    </location>
    <ligand>
        <name>S-adenosyl-L-methionine</name>
        <dbReference type="ChEBI" id="CHEBI:59789"/>
    </ligand>
</feature>
<name>RSMG_BURMA</name>
<evidence type="ECO:0000255" key="1">
    <source>
        <dbReference type="HAMAP-Rule" id="MF_00074"/>
    </source>
</evidence>
<evidence type="ECO:0000305" key="2"/>
<gene>
    <name evidence="1" type="primary">rsmG</name>
    <name type="ordered locus">BMA2945</name>
</gene>
<organism>
    <name type="scientific">Burkholderia mallei (strain ATCC 23344)</name>
    <dbReference type="NCBI Taxonomy" id="243160"/>
    <lineage>
        <taxon>Bacteria</taxon>
        <taxon>Pseudomonadati</taxon>
        <taxon>Pseudomonadota</taxon>
        <taxon>Betaproteobacteria</taxon>
        <taxon>Burkholderiales</taxon>
        <taxon>Burkholderiaceae</taxon>
        <taxon>Burkholderia</taxon>
        <taxon>pseudomallei group</taxon>
    </lineage>
</organism>
<keyword id="KW-0963">Cytoplasm</keyword>
<keyword id="KW-0489">Methyltransferase</keyword>
<keyword id="KW-1185">Reference proteome</keyword>
<keyword id="KW-0698">rRNA processing</keyword>
<keyword id="KW-0949">S-adenosyl-L-methionine</keyword>
<keyword id="KW-0808">Transferase</keyword>
<reference key="1">
    <citation type="journal article" date="2004" name="Proc. Natl. Acad. Sci. U.S.A.">
        <title>Structural flexibility in the Burkholderia mallei genome.</title>
        <authorList>
            <person name="Nierman W.C."/>
            <person name="DeShazer D."/>
            <person name="Kim H.S."/>
            <person name="Tettelin H."/>
            <person name="Nelson K.E."/>
            <person name="Feldblyum T.V."/>
            <person name="Ulrich R.L."/>
            <person name="Ronning C.M."/>
            <person name="Brinkac L.M."/>
            <person name="Daugherty S.C."/>
            <person name="Davidsen T.D."/>
            <person name="DeBoy R.T."/>
            <person name="Dimitrov G."/>
            <person name="Dodson R.J."/>
            <person name="Durkin A.S."/>
            <person name="Gwinn M.L."/>
            <person name="Haft D.H."/>
            <person name="Khouri H.M."/>
            <person name="Kolonay J.F."/>
            <person name="Madupu R."/>
            <person name="Mohammoud Y."/>
            <person name="Nelson W.C."/>
            <person name="Radune D."/>
            <person name="Romero C.M."/>
            <person name="Sarria S."/>
            <person name="Selengut J."/>
            <person name="Shamblin C."/>
            <person name="Sullivan S.A."/>
            <person name="White O."/>
            <person name="Yu Y."/>
            <person name="Zafar N."/>
            <person name="Zhou L."/>
            <person name="Fraser C.M."/>
        </authorList>
    </citation>
    <scope>NUCLEOTIDE SEQUENCE [LARGE SCALE GENOMIC DNA]</scope>
    <source>
        <strain>ATCC 23344</strain>
    </source>
</reference>
<protein>
    <recommendedName>
        <fullName evidence="1">Ribosomal RNA small subunit methyltransferase G</fullName>
        <ecNumber evidence="1">2.1.1.170</ecNumber>
    </recommendedName>
    <alternativeName>
        <fullName evidence="1">16S rRNA 7-methylguanosine methyltransferase</fullName>
        <shortName evidence="1">16S rRNA m7G methyltransferase</shortName>
    </alternativeName>
</protein>
<proteinExistence type="inferred from homology"/>
<accession>Q62FS7</accession>
<comment type="function">
    <text evidence="1">Specifically methylates the N7 position of guanine in position 527 of 16S rRNA.</text>
</comment>
<comment type="catalytic activity">
    <reaction evidence="1">
        <text>guanosine(527) in 16S rRNA + S-adenosyl-L-methionine = N(7)-methylguanosine(527) in 16S rRNA + S-adenosyl-L-homocysteine</text>
        <dbReference type="Rhea" id="RHEA:42732"/>
        <dbReference type="Rhea" id="RHEA-COMP:10209"/>
        <dbReference type="Rhea" id="RHEA-COMP:10210"/>
        <dbReference type="ChEBI" id="CHEBI:57856"/>
        <dbReference type="ChEBI" id="CHEBI:59789"/>
        <dbReference type="ChEBI" id="CHEBI:74269"/>
        <dbReference type="ChEBI" id="CHEBI:74480"/>
        <dbReference type="EC" id="2.1.1.170"/>
    </reaction>
</comment>
<comment type="subcellular location">
    <subcellularLocation>
        <location evidence="1">Cytoplasm</location>
    </subcellularLocation>
</comment>
<comment type="similarity">
    <text evidence="1">Belongs to the methyltransferase superfamily. RNA methyltransferase RsmG family.</text>
</comment>
<comment type="sequence caution" evidence="2">
    <conflict type="erroneous initiation">
        <sequence resource="EMBL-CDS" id="AAU48020"/>
    </conflict>
</comment>
<sequence length="232" mass="24796">MTVQQRRRPPIASRETLQALLSEGAQALGVALSDAQRGALLDYVALLAKWNAVYNLTAIRDPRQMLIQHILDSLSIVPHLGAHGAAAAALDVGSGGGLPGVVLAIALPGWRVTLNDIVHKKSAFQNQAKAELKLGNLSVVTGRVETLRPGADVPAKFDVIVSRAFADLADFVTLARHLVAPGGSIWAMKGVRPDEEIGRLPDGARVKQMIRLTVPSLDAERHLIEVELDEAI</sequence>
<dbReference type="EC" id="2.1.1.170" evidence="1"/>
<dbReference type="EMBL" id="CP000010">
    <property type="protein sequence ID" value="AAU48020.1"/>
    <property type="status" value="ALT_INIT"/>
    <property type="molecule type" value="Genomic_DNA"/>
</dbReference>
<dbReference type="RefSeq" id="WP_004202905.1">
    <property type="nucleotide sequence ID" value="NC_006348.1"/>
</dbReference>
<dbReference type="RefSeq" id="YP_104450.1">
    <property type="nucleotide sequence ID" value="NC_006348.1"/>
</dbReference>
<dbReference type="SMR" id="Q62FS7"/>
<dbReference type="GeneID" id="92980615"/>
<dbReference type="KEGG" id="bma:BMA2945"/>
<dbReference type="PATRIC" id="fig|243160.12.peg.3015"/>
<dbReference type="eggNOG" id="COG0357">
    <property type="taxonomic scope" value="Bacteria"/>
</dbReference>
<dbReference type="HOGENOM" id="CLU_065341_2_0_4"/>
<dbReference type="Proteomes" id="UP000006693">
    <property type="component" value="Chromosome 1"/>
</dbReference>
<dbReference type="GO" id="GO:0005829">
    <property type="term" value="C:cytosol"/>
    <property type="evidence" value="ECO:0007669"/>
    <property type="project" value="TreeGrafter"/>
</dbReference>
<dbReference type="GO" id="GO:0070043">
    <property type="term" value="F:rRNA (guanine-N7-)-methyltransferase activity"/>
    <property type="evidence" value="ECO:0007669"/>
    <property type="project" value="UniProtKB-UniRule"/>
</dbReference>
<dbReference type="CDD" id="cd02440">
    <property type="entry name" value="AdoMet_MTases"/>
    <property type="match status" value="1"/>
</dbReference>
<dbReference type="Gene3D" id="3.40.50.150">
    <property type="entry name" value="Vaccinia Virus protein VP39"/>
    <property type="match status" value="1"/>
</dbReference>
<dbReference type="HAMAP" id="MF_00074">
    <property type="entry name" value="16SrRNA_methyltr_G"/>
    <property type="match status" value="1"/>
</dbReference>
<dbReference type="InterPro" id="IPR003682">
    <property type="entry name" value="rRNA_ssu_MeTfrase_G"/>
</dbReference>
<dbReference type="InterPro" id="IPR029063">
    <property type="entry name" value="SAM-dependent_MTases_sf"/>
</dbReference>
<dbReference type="NCBIfam" id="TIGR00138">
    <property type="entry name" value="rsmG_gidB"/>
    <property type="match status" value="1"/>
</dbReference>
<dbReference type="PANTHER" id="PTHR31760">
    <property type="entry name" value="S-ADENOSYL-L-METHIONINE-DEPENDENT METHYLTRANSFERASES SUPERFAMILY PROTEIN"/>
    <property type="match status" value="1"/>
</dbReference>
<dbReference type="PANTHER" id="PTHR31760:SF0">
    <property type="entry name" value="S-ADENOSYL-L-METHIONINE-DEPENDENT METHYLTRANSFERASES SUPERFAMILY PROTEIN"/>
    <property type="match status" value="1"/>
</dbReference>
<dbReference type="Pfam" id="PF02527">
    <property type="entry name" value="GidB"/>
    <property type="match status" value="1"/>
</dbReference>
<dbReference type="PIRSF" id="PIRSF003078">
    <property type="entry name" value="GidB"/>
    <property type="match status" value="1"/>
</dbReference>
<dbReference type="SUPFAM" id="SSF53335">
    <property type="entry name" value="S-adenosyl-L-methionine-dependent methyltransferases"/>
    <property type="match status" value="1"/>
</dbReference>